<reference key="1">
    <citation type="journal article" date="2020" name="Biosci. Biotechnol. Biochem.">
        <title>Biosynthetic gene cluster identification and biological activity of lucilactaene from Fusarium sp. RK97-94.</title>
        <authorList>
            <person name="Kato S."/>
            <person name="Motoyama T."/>
            <person name="Futamura Y."/>
            <person name="Uramoto M."/>
            <person name="Nogawa T."/>
            <person name="Hayashi T."/>
            <person name="Hirota H."/>
            <person name="Tanaka A."/>
            <person name="Takahashi-Ando N."/>
            <person name="Kamakura T."/>
            <person name="Osada H."/>
        </authorList>
    </citation>
    <scope>NUCLEOTIDE SEQUENCE [GENOMIC DNA]</scope>
    <scope>FUNCTION</scope>
    <scope>DISRUPTION PHENOTYPE</scope>
    <scope>PATHWAY</scope>
    <source>
        <strain>RK97-94</strain>
    </source>
</reference>
<reference key="2">
    <citation type="journal article" date="2022" name="J. Antibiot.">
        <title>Isolation of new lucilactaene derivatives from P450 monooxygenase and aldehyde dehydrogenase knockout Fusarium sp. RK97-94 strains and their biological activities.</title>
        <authorList>
            <person name="Abdelhakim I.A."/>
            <person name="Motoyama T."/>
            <person name="Nogawa T."/>
            <person name="Mahmud F.B."/>
            <person name="Futamura Y."/>
            <person name="Takahashi S."/>
            <person name="Osada H."/>
        </authorList>
    </citation>
    <scope>FUNCTION</scope>
</reference>
<comment type="function">
    <text evidence="3 4 7">Methyltransferase; part of the gene cluster that mediates the biosynthesis of the mycotoxin lucilactaene and the lucilactaene-related compound NG-391 that act as cell cycle inhibitors with potent growth inhibitory activity against malarial parasites, moderate growth inhibitory activity against cancer cells, and no activity against bacteria and fungi (PubMed:32043422, PubMed:35484225). LUC1 performs the last step of the pathway and methylates the hydroxyl group of demethyllucilactaene at C-21 to yeald lucilactaene (PubMed:32043422). The pathway begins with the hybrid PKS-NRPS synthetase LUC5 which is responsible for the condensation of one acetyl-coenzyme A (CoA) unit with six malonyl-CoA units and the amide linkage of the arising heptaketide and homoserine, subsequently releasing the first intermediate prelucilactaene B. Both the cytochrome P450 monooxygenase LUC2 and the hydrolase LUC6 function in parallel in modification of prelucilactaene B. LUC6 may catalyze the 2-pyrrolidone ring formation to form prelucilactaene C from prelucilactaene B, followed by C-15 hydroxylation by the same enzyme to give prelucilactaene D, which is then converted to prelucilactaene E by epoxidation, and finally to prelucilactaene F by cyclization. Prelucilactane D, prelucilactaene E, and prelucilactaene F can be converted to dihydrolucilactaene, NG391, and lucilactaene, respectively, via C-20 methyl group hydroxylation by the cytochrome P450 monooxygenase LUC2. However, LUC2, unlike FUS8 in fusarin C biosynthesis, is not enough for the full oxidation of the C-20 methyl group into carboxylic acid, which is a prerequisite for the final methylation step. The aldehyde dehydrogenase LUC3 is involved in the biosynthesis by further oxidation of the C-20 alcoholic analog prelucilactaene G into a carboxylic derivative. This unidentified carboxylic derivative may be converted to demethyllucilactaene. As the last step, the methyltransferase LUC1 methylates the hydroxyl group at C-21 of demethyllucilactaene to generate lucilactaene (Probable).</text>
</comment>
<comment type="cofactor">
    <cofactor evidence="2">
        <name>Mg(2+)</name>
        <dbReference type="ChEBI" id="CHEBI:18420"/>
    </cofactor>
    <text evidence="2">Binds 1 Mg(2+) ion per subunit.</text>
</comment>
<comment type="pathway">
    <text evidence="3">Mycotoxin biosynthesis.</text>
</comment>
<comment type="disruption phenotype">
    <text evidence="3">Abolishes the production of lucilactaene and NG-391, and leads to the accumulation of demethyllucilactaene and (8Z)-demethyllucilactaene.</text>
</comment>
<comment type="similarity">
    <text evidence="6">Belongs to the methyltransferase superfamily. Type-7 methyltransferase family.</text>
</comment>
<proteinExistence type="inferred from homology"/>
<protein>
    <recommendedName>
        <fullName evidence="5">Methyltransferase LUC1</fullName>
        <ecNumber evidence="3">2.1.1.-</ecNumber>
    </recommendedName>
    <alternativeName>
        <fullName evidence="5">Lucilactaene biosynthesis cluster protein 1</fullName>
    </alternativeName>
</protein>
<gene>
    <name evidence="5" type="primary">LUC1</name>
</gene>
<organism>
    <name type="scientific">Fusarium sp</name>
    <dbReference type="NCBI Taxonomy" id="29916"/>
    <lineage>
        <taxon>Eukaryota</taxon>
        <taxon>Fungi</taxon>
        <taxon>Dikarya</taxon>
        <taxon>Ascomycota</taxon>
        <taxon>Pezizomycotina</taxon>
        <taxon>Sordariomycetes</taxon>
        <taxon>Hypocreomycetidae</taxon>
        <taxon>Hypocreales</taxon>
        <taxon>Nectriaceae</taxon>
        <taxon>Fusarium</taxon>
    </lineage>
</organism>
<evidence type="ECO:0000250" key="1">
    <source>
        <dbReference type="UniProtKB" id="A0A6C0WW36"/>
    </source>
</evidence>
<evidence type="ECO:0000250" key="2">
    <source>
        <dbReference type="UniProtKB" id="Q9FLN8"/>
    </source>
</evidence>
<evidence type="ECO:0000269" key="3">
    <source>
    </source>
</evidence>
<evidence type="ECO:0000269" key="4">
    <source>
    </source>
</evidence>
<evidence type="ECO:0000303" key="5">
    <source>
    </source>
</evidence>
<evidence type="ECO:0000305" key="6"/>
<evidence type="ECO:0000305" key="7">
    <source>
    </source>
</evidence>
<sequence>MADTAHINDVPMQGKGLYSSHAALQHEAMLKALPLLQQATNTVVTNVNRNLRPLTVVEYGSAHGNNSIQPMVTILDSTPPGDIQLVFSDRPENDFNTLSTTVTTWAEGLDKAKFPHSIFPAMIPRSFYRQVVPSRSADLGFSLAALHHLDHVPKSQDGVDHQALLKRQAHLDLLQFLKLRADEIVPGGSLVLSFVSQSSSGRENYAGLVDACRNAMIDMVKDGTLPGAVAGSFYVPTYNRTLQDVQKVIEEVIPTWIAHEVFEQDCLHPAKKDLELQKSSDDYDSDEASRRYADVVVDWLMAVCAGYFLKAVKVGSDNTFTGEDAEKFLADWVKRTKHFFYKDHRDEDVVCSFIFVRLERV</sequence>
<dbReference type="EC" id="2.1.1.-" evidence="3"/>
<dbReference type="EMBL" id="LC515193">
    <property type="protein sequence ID" value="BBQ09592.1"/>
    <property type="molecule type" value="Genomic_DNA"/>
</dbReference>
<dbReference type="SMR" id="A0A6J4B4P7"/>
<dbReference type="GO" id="GO:0046872">
    <property type="term" value="F:metal ion binding"/>
    <property type="evidence" value="ECO:0007669"/>
    <property type="project" value="UniProtKB-KW"/>
</dbReference>
<dbReference type="GO" id="GO:0008168">
    <property type="term" value="F:methyltransferase activity"/>
    <property type="evidence" value="ECO:0007669"/>
    <property type="project" value="UniProtKB-KW"/>
</dbReference>
<dbReference type="GO" id="GO:0032259">
    <property type="term" value="P:methylation"/>
    <property type="evidence" value="ECO:0007669"/>
    <property type="project" value="UniProtKB-KW"/>
</dbReference>
<dbReference type="Gene3D" id="1.10.1200.270">
    <property type="entry name" value="Methyltransferase, alpha-helical capping domain"/>
    <property type="match status" value="1"/>
</dbReference>
<dbReference type="Gene3D" id="3.40.50.150">
    <property type="entry name" value="Vaccinia Virus protein VP39"/>
    <property type="match status" value="1"/>
</dbReference>
<dbReference type="InterPro" id="IPR005299">
    <property type="entry name" value="MeTrfase_7"/>
</dbReference>
<dbReference type="InterPro" id="IPR042086">
    <property type="entry name" value="MeTrfase_capping"/>
</dbReference>
<dbReference type="InterPro" id="IPR029063">
    <property type="entry name" value="SAM-dependent_MTases_sf"/>
</dbReference>
<dbReference type="PANTHER" id="PTHR31009">
    <property type="entry name" value="S-ADENOSYL-L-METHIONINE:CARBOXYL METHYLTRANSFERASE FAMILY PROTEIN"/>
    <property type="match status" value="1"/>
</dbReference>
<dbReference type="Pfam" id="PF03492">
    <property type="entry name" value="Methyltransf_7"/>
    <property type="match status" value="1"/>
</dbReference>
<dbReference type="SUPFAM" id="SSF53335">
    <property type="entry name" value="S-adenosyl-L-methionine-dependent methyltransferases"/>
    <property type="match status" value="1"/>
</dbReference>
<keyword id="KW-0460">Magnesium</keyword>
<keyword id="KW-0479">Metal-binding</keyword>
<keyword id="KW-0489">Methyltransferase</keyword>
<keyword id="KW-0949">S-adenosyl-L-methionine</keyword>
<keyword id="KW-0808">Transferase</keyword>
<name>LUC1_FUSSX</name>
<accession>A0A6J4B4P7</accession>
<feature type="chain" id="PRO_0000454633" description="Methyltransferase LUC1">
    <location>
        <begin position="1"/>
        <end position="361"/>
    </location>
</feature>
<feature type="binding site" evidence="1">
    <location>
        <position position="18"/>
    </location>
    <ligand>
        <name>S-adenosyl-L-homocysteine</name>
        <dbReference type="ChEBI" id="CHEBI:57856"/>
    </ligand>
</feature>
<feature type="binding site" evidence="1">
    <location>
        <position position="66"/>
    </location>
    <ligand>
        <name>S-adenosyl-L-homocysteine</name>
        <dbReference type="ChEBI" id="CHEBI:57856"/>
    </ligand>
</feature>
<feature type="binding site" evidence="1">
    <location>
        <position position="89"/>
    </location>
    <ligand>
        <name>S-adenosyl-L-homocysteine</name>
        <dbReference type="ChEBI" id="CHEBI:57856"/>
    </ligand>
</feature>
<feature type="binding site" evidence="1">
    <location>
        <position position="126"/>
    </location>
    <ligand>
        <name>S-adenosyl-L-homocysteine</name>
        <dbReference type="ChEBI" id="CHEBI:57856"/>
    </ligand>
</feature>
<feature type="binding site" evidence="1">
    <location>
        <position position="127"/>
    </location>
    <ligand>
        <name>S-adenosyl-L-homocysteine</name>
        <dbReference type="ChEBI" id="CHEBI:57856"/>
    </ligand>
</feature>
<feature type="binding site" evidence="2">
    <location>
        <position position="156"/>
    </location>
    <ligand>
        <name>Mg(2+)</name>
        <dbReference type="ChEBI" id="CHEBI:18420"/>
    </ligand>
</feature>
<feature type="binding site" evidence="2">
    <location>
        <position position="233"/>
    </location>
    <ligand>
        <name>Mg(2+)</name>
        <dbReference type="ChEBI" id="CHEBI:18420"/>
    </ligand>
</feature>